<evidence type="ECO:0000255" key="1">
    <source>
        <dbReference type="HAMAP-Rule" id="MF_00052"/>
    </source>
</evidence>
<evidence type="ECO:0000255" key="2">
    <source>
        <dbReference type="PROSITE-ProRule" id="PRU01319"/>
    </source>
</evidence>
<dbReference type="EC" id="3.1.26.4" evidence="1"/>
<dbReference type="EMBL" id="CP000688">
    <property type="protein sequence ID" value="ABQ17290.1"/>
    <property type="molecule type" value="Genomic_DNA"/>
</dbReference>
<dbReference type="SMR" id="A5FR86"/>
<dbReference type="KEGG" id="deb:DehaBAV1_0706"/>
<dbReference type="PATRIC" id="fig|216389.18.peg.755"/>
<dbReference type="HOGENOM" id="CLU_036532_3_2_0"/>
<dbReference type="GO" id="GO:0005737">
    <property type="term" value="C:cytoplasm"/>
    <property type="evidence" value="ECO:0007669"/>
    <property type="project" value="UniProtKB-SubCell"/>
</dbReference>
<dbReference type="GO" id="GO:0032299">
    <property type="term" value="C:ribonuclease H2 complex"/>
    <property type="evidence" value="ECO:0007669"/>
    <property type="project" value="TreeGrafter"/>
</dbReference>
<dbReference type="GO" id="GO:0030145">
    <property type="term" value="F:manganese ion binding"/>
    <property type="evidence" value="ECO:0007669"/>
    <property type="project" value="UniProtKB-UniRule"/>
</dbReference>
<dbReference type="GO" id="GO:0003723">
    <property type="term" value="F:RNA binding"/>
    <property type="evidence" value="ECO:0007669"/>
    <property type="project" value="InterPro"/>
</dbReference>
<dbReference type="GO" id="GO:0004523">
    <property type="term" value="F:RNA-DNA hybrid ribonuclease activity"/>
    <property type="evidence" value="ECO:0007669"/>
    <property type="project" value="UniProtKB-UniRule"/>
</dbReference>
<dbReference type="GO" id="GO:0043137">
    <property type="term" value="P:DNA replication, removal of RNA primer"/>
    <property type="evidence" value="ECO:0007669"/>
    <property type="project" value="TreeGrafter"/>
</dbReference>
<dbReference type="GO" id="GO:0006298">
    <property type="term" value="P:mismatch repair"/>
    <property type="evidence" value="ECO:0007669"/>
    <property type="project" value="TreeGrafter"/>
</dbReference>
<dbReference type="CDD" id="cd07182">
    <property type="entry name" value="RNase_HII_bacteria_HII_like"/>
    <property type="match status" value="1"/>
</dbReference>
<dbReference type="Gene3D" id="3.30.420.10">
    <property type="entry name" value="Ribonuclease H-like superfamily/Ribonuclease H"/>
    <property type="match status" value="1"/>
</dbReference>
<dbReference type="HAMAP" id="MF_00052_B">
    <property type="entry name" value="RNase_HII_B"/>
    <property type="match status" value="1"/>
</dbReference>
<dbReference type="InterPro" id="IPR022898">
    <property type="entry name" value="RNase_HII"/>
</dbReference>
<dbReference type="InterPro" id="IPR001352">
    <property type="entry name" value="RNase_HII/HIII"/>
</dbReference>
<dbReference type="InterPro" id="IPR024567">
    <property type="entry name" value="RNase_HII/HIII_dom"/>
</dbReference>
<dbReference type="InterPro" id="IPR012337">
    <property type="entry name" value="RNaseH-like_sf"/>
</dbReference>
<dbReference type="InterPro" id="IPR036397">
    <property type="entry name" value="RNaseH_sf"/>
</dbReference>
<dbReference type="NCBIfam" id="NF000595">
    <property type="entry name" value="PRK00015.1-3"/>
    <property type="match status" value="1"/>
</dbReference>
<dbReference type="PANTHER" id="PTHR10954">
    <property type="entry name" value="RIBONUCLEASE H2 SUBUNIT A"/>
    <property type="match status" value="1"/>
</dbReference>
<dbReference type="PANTHER" id="PTHR10954:SF18">
    <property type="entry name" value="RIBONUCLEASE HII"/>
    <property type="match status" value="1"/>
</dbReference>
<dbReference type="Pfam" id="PF01351">
    <property type="entry name" value="RNase_HII"/>
    <property type="match status" value="1"/>
</dbReference>
<dbReference type="SUPFAM" id="SSF53098">
    <property type="entry name" value="Ribonuclease H-like"/>
    <property type="match status" value="1"/>
</dbReference>
<dbReference type="PROSITE" id="PS51975">
    <property type="entry name" value="RNASE_H_2"/>
    <property type="match status" value="1"/>
</dbReference>
<comment type="function">
    <text evidence="1">Endonuclease that specifically degrades the RNA of RNA-DNA hybrids.</text>
</comment>
<comment type="catalytic activity">
    <reaction evidence="1">
        <text>Endonucleolytic cleavage to 5'-phosphomonoester.</text>
        <dbReference type="EC" id="3.1.26.4"/>
    </reaction>
</comment>
<comment type="cofactor">
    <cofactor evidence="1">
        <name>Mn(2+)</name>
        <dbReference type="ChEBI" id="CHEBI:29035"/>
    </cofactor>
    <cofactor evidence="1">
        <name>Mg(2+)</name>
        <dbReference type="ChEBI" id="CHEBI:18420"/>
    </cofactor>
    <text evidence="1">Manganese or magnesium. Binds 1 divalent metal ion per monomer in the absence of substrate. May bind a second metal ion after substrate binding.</text>
</comment>
<comment type="subcellular location">
    <subcellularLocation>
        <location evidence="1">Cytoplasm</location>
    </subcellularLocation>
</comment>
<comment type="similarity">
    <text evidence="1">Belongs to the RNase HII family.</text>
</comment>
<proteinExistence type="inferred from homology"/>
<reference key="1">
    <citation type="submission" date="2007-05" db="EMBL/GenBank/DDBJ databases">
        <title>Complete sequence of Dehalococcoides sp. BAV1.</title>
        <authorList>
            <consortium name="US DOE Joint Genome Institute"/>
            <person name="Copeland A."/>
            <person name="Lucas S."/>
            <person name="Lapidus A."/>
            <person name="Barry K."/>
            <person name="Detter J.C."/>
            <person name="Glavina del Rio T."/>
            <person name="Hammon N."/>
            <person name="Israni S."/>
            <person name="Pitluck S."/>
            <person name="Lowry S."/>
            <person name="Clum A."/>
            <person name="Schmutz J."/>
            <person name="Larimer F."/>
            <person name="Land M."/>
            <person name="Hauser L."/>
            <person name="Kyrpides N."/>
            <person name="Kim E."/>
            <person name="Ritalahti K.M."/>
            <person name="Loeffler F."/>
            <person name="Richardson P."/>
        </authorList>
    </citation>
    <scope>NUCLEOTIDE SEQUENCE [LARGE SCALE GENOMIC DNA]</scope>
    <source>
        <strain>ATCC BAA-2100 / JCM 16839 / KCTC 5957 / BAV1</strain>
    </source>
</reference>
<feature type="chain" id="PRO_1000074921" description="Ribonuclease HII">
    <location>
        <begin position="1"/>
        <end position="212"/>
    </location>
</feature>
<feature type="domain" description="RNase H type-2" evidence="2">
    <location>
        <begin position="22"/>
        <end position="212"/>
    </location>
</feature>
<feature type="binding site" evidence="1">
    <location>
        <position position="28"/>
    </location>
    <ligand>
        <name>a divalent metal cation</name>
        <dbReference type="ChEBI" id="CHEBI:60240"/>
    </ligand>
</feature>
<feature type="binding site" evidence="1">
    <location>
        <position position="29"/>
    </location>
    <ligand>
        <name>a divalent metal cation</name>
        <dbReference type="ChEBI" id="CHEBI:60240"/>
    </ligand>
</feature>
<feature type="binding site" evidence="1">
    <location>
        <position position="123"/>
    </location>
    <ligand>
        <name>a divalent metal cation</name>
        <dbReference type="ChEBI" id="CHEBI:60240"/>
    </ligand>
</feature>
<name>RNH2_DEHMB</name>
<sequence length="212" mass="23034">MPATVICPSRAEEKLLRKQGFILIAGLDEAGRGCLAGPVVAGAVIMPPRLKGDWVEMVRDSKVLSPAKREYLYCHIVSMAVTFGVGAVDNEQIDSMGIAPATRLAMKQAVEDLTCQPDFLLVDYLKLPDIPLPQKGIVDGDALCFSIACASIVAKVSRDRLMSKLDMEYPGYYLAKHKGYGTALHVECICQKGISPIHRRTFAPLKGMIDGL</sequence>
<organism>
    <name type="scientific">Dehalococcoides mccartyi (strain ATCC BAA-2100 / JCM 16839 / KCTC 5957 / BAV1)</name>
    <dbReference type="NCBI Taxonomy" id="216389"/>
    <lineage>
        <taxon>Bacteria</taxon>
        <taxon>Bacillati</taxon>
        <taxon>Chloroflexota</taxon>
        <taxon>Dehalococcoidia</taxon>
        <taxon>Dehalococcoidales</taxon>
        <taxon>Dehalococcoidaceae</taxon>
        <taxon>Dehalococcoides</taxon>
    </lineage>
</organism>
<keyword id="KW-0963">Cytoplasm</keyword>
<keyword id="KW-0255">Endonuclease</keyword>
<keyword id="KW-0378">Hydrolase</keyword>
<keyword id="KW-0464">Manganese</keyword>
<keyword id="KW-0479">Metal-binding</keyword>
<keyword id="KW-0540">Nuclease</keyword>
<protein>
    <recommendedName>
        <fullName evidence="1">Ribonuclease HII</fullName>
        <shortName evidence="1">RNase HII</shortName>
        <ecNumber evidence="1">3.1.26.4</ecNumber>
    </recommendedName>
</protein>
<accession>A5FR86</accession>
<gene>
    <name evidence="1" type="primary">rnhB</name>
    <name type="ordered locus">DehaBAV1_0706</name>
</gene>